<keyword id="KW-0235">DNA replication</keyword>
<keyword id="KW-0239">DNA-directed DNA polymerase</keyword>
<keyword id="KW-0548">Nucleotidyltransferase</keyword>
<keyword id="KW-0808">Transferase</keyword>
<proteinExistence type="inferred from homology"/>
<protein>
    <recommendedName>
        <fullName>DNA polymerase III subunit delta</fullName>
        <ecNumber>2.7.7.7</ecNumber>
    </recommendedName>
</protein>
<name>HOLA_BUCAP</name>
<feature type="chain" id="PRO_0000105503" description="DNA polymerase III subunit delta">
    <location>
        <begin position="1"/>
        <end position="338"/>
    </location>
</feature>
<gene>
    <name type="primary">holA</name>
    <name type="ordered locus">BUsg_430</name>
</gene>
<organism>
    <name type="scientific">Buchnera aphidicola subsp. Schizaphis graminum (strain Sg)</name>
    <dbReference type="NCBI Taxonomy" id="198804"/>
    <lineage>
        <taxon>Bacteria</taxon>
        <taxon>Pseudomonadati</taxon>
        <taxon>Pseudomonadota</taxon>
        <taxon>Gammaproteobacteria</taxon>
        <taxon>Enterobacterales</taxon>
        <taxon>Erwiniaceae</taxon>
        <taxon>Buchnera</taxon>
    </lineage>
</organism>
<accession>Q8K9B8</accession>
<comment type="function">
    <text evidence="1">DNA polymerase III is a complex, multichain enzyme responsible for most of the replicative synthesis in bacteria. This DNA polymerase also exhibits 3' to 5' exonuclease activity. The delta subunit seems to interact with the gamma subunit to transfer the beta subunit on the DNA (By similarity).</text>
</comment>
<comment type="catalytic activity">
    <reaction>
        <text>DNA(n) + a 2'-deoxyribonucleoside 5'-triphosphate = DNA(n+1) + diphosphate</text>
        <dbReference type="Rhea" id="RHEA:22508"/>
        <dbReference type="Rhea" id="RHEA-COMP:17339"/>
        <dbReference type="Rhea" id="RHEA-COMP:17340"/>
        <dbReference type="ChEBI" id="CHEBI:33019"/>
        <dbReference type="ChEBI" id="CHEBI:61560"/>
        <dbReference type="ChEBI" id="CHEBI:173112"/>
        <dbReference type="EC" id="2.7.7.7"/>
    </reaction>
</comment>
<comment type="subunit">
    <text evidence="1">DNA polymerase III contains a core (composed of alpha, epsilon and theta chains) that associates with a tau subunit. This core dimerizes to form the POLIII' complex. PolIII' associates with the gamma complex (composed of gamma, delta, delta', psi and chi chains) and with the beta chain to form the complete DNA polymerase III complex (By similarity).</text>
</comment>
<comment type="similarity">
    <text evidence="2">Belongs to the DNA polymerase HolA subunit family.</text>
</comment>
<sequence>MKIIYPEELKQKLIKKLNYFYILLGEDSILLSKAEQLIFYFAKDKKFIEKNTINIEKSTDWNKVINFHKSKNLFFKKTILIINFTIKKLNLSLVKNINKIPLFKNKDILTVIKLNALSSLIKKSTILKILILESEIIYCSTPYEWAFKKWLQYEIKTRNLKITQESFLLLHKYYEGNTLCLNQILDILSITWPNENIKIEKIKKIINQFSIFSPVNWINAIFNKNKKKAIYILDSFFKQKYNPLILIRTLQKDLLILLNMKREKKLNINFFLKKNNISLNRSKFFANALYYIDFNNFLKIIRILLQIEIKIKKEYNNSVWIQLKTLTLLLSSPMKYTP</sequence>
<dbReference type="EC" id="2.7.7.7"/>
<dbReference type="EMBL" id="AE013218">
    <property type="protein sequence ID" value="AAM67973.1"/>
    <property type="molecule type" value="Genomic_DNA"/>
</dbReference>
<dbReference type="RefSeq" id="WP_011053940.1">
    <property type="nucleotide sequence ID" value="NC_004061.1"/>
</dbReference>
<dbReference type="SMR" id="Q8K9B8"/>
<dbReference type="STRING" id="198804.BUsg_430"/>
<dbReference type="GeneID" id="93003902"/>
<dbReference type="KEGG" id="bas:BUsg_430"/>
<dbReference type="eggNOG" id="COG1466">
    <property type="taxonomic scope" value="Bacteria"/>
</dbReference>
<dbReference type="HOGENOM" id="CLU_044694_0_2_6"/>
<dbReference type="Proteomes" id="UP000000416">
    <property type="component" value="Chromosome"/>
</dbReference>
<dbReference type="GO" id="GO:0009360">
    <property type="term" value="C:DNA polymerase III complex"/>
    <property type="evidence" value="ECO:0007669"/>
    <property type="project" value="InterPro"/>
</dbReference>
<dbReference type="GO" id="GO:0003677">
    <property type="term" value="F:DNA binding"/>
    <property type="evidence" value="ECO:0007669"/>
    <property type="project" value="InterPro"/>
</dbReference>
<dbReference type="GO" id="GO:0003887">
    <property type="term" value="F:DNA-directed DNA polymerase activity"/>
    <property type="evidence" value="ECO:0007669"/>
    <property type="project" value="UniProtKB-KW"/>
</dbReference>
<dbReference type="GO" id="GO:0006261">
    <property type="term" value="P:DNA-templated DNA replication"/>
    <property type="evidence" value="ECO:0007669"/>
    <property type="project" value="TreeGrafter"/>
</dbReference>
<dbReference type="Gene3D" id="1.10.8.60">
    <property type="match status" value="1"/>
</dbReference>
<dbReference type="Gene3D" id="1.20.272.10">
    <property type="match status" value="1"/>
</dbReference>
<dbReference type="Gene3D" id="3.40.50.300">
    <property type="entry name" value="P-loop containing nucleotide triphosphate hydrolases"/>
    <property type="match status" value="1"/>
</dbReference>
<dbReference type="InterPro" id="IPR008921">
    <property type="entry name" value="DNA_pol3_clamp-load_cplx_C"/>
</dbReference>
<dbReference type="InterPro" id="IPR032780">
    <property type="entry name" value="DNA_pol3_delt_C"/>
</dbReference>
<dbReference type="InterPro" id="IPR010372">
    <property type="entry name" value="DNA_pol3_delta_N"/>
</dbReference>
<dbReference type="InterPro" id="IPR005790">
    <property type="entry name" value="DNA_polIII_delta"/>
</dbReference>
<dbReference type="InterPro" id="IPR027417">
    <property type="entry name" value="P-loop_NTPase"/>
</dbReference>
<dbReference type="NCBIfam" id="TIGR01128">
    <property type="entry name" value="holA"/>
    <property type="match status" value="1"/>
</dbReference>
<dbReference type="PANTHER" id="PTHR34388">
    <property type="entry name" value="DNA POLYMERASE III SUBUNIT DELTA"/>
    <property type="match status" value="1"/>
</dbReference>
<dbReference type="PANTHER" id="PTHR34388:SF1">
    <property type="entry name" value="DNA POLYMERASE III SUBUNIT DELTA"/>
    <property type="match status" value="1"/>
</dbReference>
<dbReference type="Pfam" id="PF14840">
    <property type="entry name" value="DNA_pol3_delt_C"/>
    <property type="match status" value="1"/>
</dbReference>
<dbReference type="Pfam" id="PF06144">
    <property type="entry name" value="DNA_pol3_delta"/>
    <property type="match status" value="1"/>
</dbReference>
<dbReference type="SUPFAM" id="SSF52540">
    <property type="entry name" value="P-loop containing nucleoside triphosphate hydrolases"/>
    <property type="match status" value="1"/>
</dbReference>
<dbReference type="SUPFAM" id="SSF48019">
    <property type="entry name" value="post-AAA+ oligomerization domain-like"/>
    <property type="match status" value="1"/>
</dbReference>
<evidence type="ECO:0000250" key="1"/>
<evidence type="ECO:0000305" key="2"/>
<reference key="1">
    <citation type="journal article" date="2002" name="Science">
        <title>50 million years of genomic stasis in endosymbiotic bacteria.</title>
        <authorList>
            <person name="Tamas I."/>
            <person name="Klasson L."/>
            <person name="Canbaeck B."/>
            <person name="Naeslund A.K."/>
            <person name="Eriksson A.-S."/>
            <person name="Wernegreen J.J."/>
            <person name="Sandstroem J.P."/>
            <person name="Moran N.A."/>
            <person name="Andersson S.G.E."/>
        </authorList>
    </citation>
    <scope>NUCLEOTIDE SEQUENCE [LARGE SCALE GENOMIC DNA]</scope>
    <source>
        <strain>Sg</strain>
    </source>
</reference>